<accession>L7HT17</accession>
<evidence type="ECO:0000250" key="1">
    <source>
        <dbReference type="UniProtKB" id="P04798"/>
    </source>
</evidence>
<evidence type="ECO:0000250" key="2">
    <source>
        <dbReference type="UniProtKB" id="Q5K0D9"/>
    </source>
</evidence>
<evidence type="ECO:0000269" key="3">
    <source>
    </source>
</evidence>
<evidence type="ECO:0000303" key="4">
    <source>
    </source>
</evidence>
<evidence type="ECO:0000305" key="5"/>
<evidence type="ECO:0000305" key="6">
    <source>
    </source>
</evidence>
<organism>
    <name type="scientific">Pyricularia oryzae (strain Y34)</name>
    <name type="common">Rice blast fungus</name>
    <name type="synonym">Magnaporthe oryzae</name>
    <dbReference type="NCBI Taxonomy" id="1143189"/>
    <lineage>
        <taxon>Eukaryota</taxon>
        <taxon>Fungi</taxon>
        <taxon>Dikarya</taxon>
        <taxon>Ascomycota</taxon>
        <taxon>Pezizomycotina</taxon>
        <taxon>Sordariomycetes</taxon>
        <taxon>Sordariomycetidae</taxon>
        <taxon>Magnaporthales</taxon>
        <taxon>Pyriculariaceae</taxon>
        <taxon>Pyricularia</taxon>
    </lineage>
</organism>
<comment type="function">
    <text evidence="2 3">Cytochrome P450 monooxygenase involved in the biosynthesis of abscisic acid (ABA), a phytohormone that acts antagonistically toward salicylic acid (SA), jasmonic acid (JA) and ethylene (ETH) signaling, to impede plant defense responses (PubMed:26648962). During pathogen-host interaction, ABA plays a dual role in disease severity by increasing plant susceptibility and accelerating pathogenesis in the fungus itself (PubMed:26648962). The first step of the pathway catalyzes the reaction from farnesyl diphosphate to alpha-ionylideneethane performed by the alpha-ionylideneethane synthase ABA3 via a three-step reaction mechanism involving 2 neutral intermediates, beta-farnesene and allofarnesene (By similarity). The cytochrome P450 monooxygenase ABA1 might then be involved in the conversion of alpha-ionylideneethane to alpha-ionylideneacetic acid (By similarity). Alpha-ionylideneacetic acid is further converted to abscisic acid in 2 steps involving the cytochrome P450 monooxygenase ABA2 and the short-chain dehydrogenase/reductase ABA4, via the intermediates 1'-deoxy-ABA or 1',4'-trans-diol-ABA, depending on the order of action of these 2 enzymes (By similarity). ABA2 is responsible for the hydroxylation of carbon atom C-1' and ABA4 might be involved in the oxidation of the C-4' carbon atom (By similarity).</text>
</comment>
<comment type="cofactor">
    <cofactor evidence="1">
        <name>heme</name>
        <dbReference type="ChEBI" id="CHEBI:30413"/>
    </cofactor>
</comment>
<comment type="pathway">
    <text evidence="3">Hormone biosynthesis.</text>
</comment>
<comment type="similarity">
    <text evidence="5">Belongs to the cytochrome P450 family.</text>
</comment>
<name>ABA2_PYRO3</name>
<protein>
    <recommendedName>
        <fullName evidence="4">Cytochrome P450 monooxygenase ABA2</fullName>
        <ecNumber evidence="6">1.-.-.-</ecNumber>
    </recommendedName>
    <alternativeName>
        <fullName evidence="4">Abscisic acid biosynthesis protein 2</fullName>
    </alternativeName>
</protein>
<reference key="1">
    <citation type="journal article" date="2012" name="PLoS Genet.">
        <title>Comparative analysis of the genomes of two field isolates of the rice blast fungus Magnaporthe oryzae.</title>
        <authorList>
            <person name="Xue M."/>
            <person name="Yang J."/>
            <person name="Li Z."/>
            <person name="Hu S."/>
            <person name="Yao N."/>
            <person name="Dean R.A."/>
            <person name="Zhao W."/>
            <person name="Shen M."/>
            <person name="Zhang H."/>
            <person name="Li C."/>
            <person name="Liu L."/>
            <person name="Cao L."/>
            <person name="Xu X."/>
            <person name="Xing Y."/>
            <person name="Hsiang T."/>
            <person name="Zhang Z."/>
            <person name="Xu J.-R."/>
            <person name="Peng Y.-L."/>
        </authorList>
    </citation>
    <scope>NUCLEOTIDE SEQUENCE [LARGE SCALE GENOMIC DNA]</scope>
    <source>
        <strain>Y34</strain>
    </source>
</reference>
<reference key="2">
    <citation type="journal article" date="2015" name="Front. Plant Sci.">
        <title>Crucial roles of abscisic acid biogenesis in virulence of rice blast fungus Magnaporthe oryzae.</title>
        <authorList>
            <person name="Spence C.A."/>
            <person name="Lakshmanan V."/>
            <person name="Donofrio N."/>
            <person name="Bais H.P."/>
        </authorList>
    </citation>
    <scope>IDENTIFICATION</scope>
    <scope>INDUCTION</scope>
    <scope>FUNCTION</scope>
    <scope>PATHWAY</scope>
</reference>
<reference key="3">
    <citation type="journal article" date="2017" name="Front. Plant Sci.">
        <title>Abscisic acid as pathogen effector and immune regulator.</title>
        <authorList>
            <person name="Lievens L."/>
            <person name="Pollier J."/>
            <person name="Goossens A."/>
            <person name="Beyaert R."/>
            <person name="Staal J."/>
        </authorList>
    </citation>
    <scope>FUNCTION</scope>
</reference>
<keyword id="KW-0349">Heme</keyword>
<keyword id="KW-0408">Iron</keyword>
<keyword id="KW-0479">Metal-binding</keyword>
<keyword id="KW-0503">Monooxygenase</keyword>
<keyword id="KW-0560">Oxidoreductase</keyword>
<keyword id="KW-0843">Virulence</keyword>
<dbReference type="EC" id="1.-.-.-" evidence="6"/>
<dbReference type="EMBL" id="JH793116">
    <property type="protein sequence ID" value="ELQ34093.1"/>
    <property type="molecule type" value="Genomic_DNA"/>
</dbReference>
<dbReference type="SMR" id="L7HT17"/>
<dbReference type="OrthoDB" id="621699at147550"/>
<dbReference type="Proteomes" id="UP000011086">
    <property type="component" value="Unassembled WGS sequence"/>
</dbReference>
<dbReference type="GO" id="GO:0020037">
    <property type="term" value="F:heme binding"/>
    <property type="evidence" value="ECO:0007669"/>
    <property type="project" value="InterPro"/>
</dbReference>
<dbReference type="GO" id="GO:0005506">
    <property type="term" value="F:iron ion binding"/>
    <property type="evidence" value="ECO:0007669"/>
    <property type="project" value="InterPro"/>
</dbReference>
<dbReference type="GO" id="GO:0004497">
    <property type="term" value="F:monooxygenase activity"/>
    <property type="evidence" value="ECO:0007669"/>
    <property type="project" value="UniProtKB-KW"/>
</dbReference>
<dbReference type="GO" id="GO:0016705">
    <property type="term" value="F:oxidoreductase activity, acting on paired donors, with incorporation or reduction of molecular oxygen"/>
    <property type="evidence" value="ECO:0007669"/>
    <property type="project" value="InterPro"/>
</dbReference>
<dbReference type="GO" id="GO:0009688">
    <property type="term" value="P:abscisic acid biosynthetic process"/>
    <property type="evidence" value="ECO:0000250"/>
    <property type="project" value="GO_Central"/>
</dbReference>
<dbReference type="CDD" id="cd11058">
    <property type="entry name" value="CYP60B-like"/>
    <property type="match status" value="1"/>
</dbReference>
<dbReference type="Gene3D" id="1.10.630.10">
    <property type="entry name" value="Cytochrome P450"/>
    <property type="match status" value="1"/>
</dbReference>
<dbReference type="InterPro" id="IPR001128">
    <property type="entry name" value="Cyt_P450"/>
</dbReference>
<dbReference type="InterPro" id="IPR017972">
    <property type="entry name" value="Cyt_P450_CS"/>
</dbReference>
<dbReference type="InterPro" id="IPR002401">
    <property type="entry name" value="Cyt_P450_E_grp-I"/>
</dbReference>
<dbReference type="InterPro" id="IPR036396">
    <property type="entry name" value="Cyt_P450_sf"/>
</dbReference>
<dbReference type="InterPro" id="IPR050121">
    <property type="entry name" value="Cytochrome_P450_monoxygenase"/>
</dbReference>
<dbReference type="PANTHER" id="PTHR24305">
    <property type="entry name" value="CYTOCHROME P450"/>
    <property type="match status" value="1"/>
</dbReference>
<dbReference type="PANTHER" id="PTHR24305:SF210">
    <property type="entry name" value="CYTOCHROME P450 MONOOXYGENASE ASQL-RELATED"/>
    <property type="match status" value="1"/>
</dbReference>
<dbReference type="Pfam" id="PF00067">
    <property type="entry name" value="p450"/>
    <property type="match status" value="1"/>
</dbReference>
<dbReference type="PRINTS" id="PR00463">
    <property type="entry name" value="EP450I"/>
</dbReference>
<dbReference type="PRINTS" id="PR00385">
    <property type="entry name" value="P450"/>
</dbReference>
<dbReference type="SUPFAM" id="SSF48264">
    <property type="entry name" value="Cytochrome P450"/>
    <property type="match status" value="1"/>
</dbReference>
<dbReference type="PROSITE" id="PS00086">
    <property type="entry name" value="CYTOCHROME_P450"/>
    <property type="match status" value="1"/>
</dbReference>
<feature type="chain" id="PRO_0000448418" description="Cytochrome P450 monooxygenase ABA2">
    <location>
        <begin position="1"/>
        <end position="418"/>
    </location>
</feature>
<feature type="binding site" description="axial binding residue" evidence="1">
    <location>
        <position position="355"/>
    </location>
    <ligand>
        <name>heme</name>
        <dbReference type="ChEBI" id="CHEBI:30413"/>
    </ligand>
    <ligandPart>
        <name>Fe</name>
        <dbReference type="ChEBI" id="CHEBI:18248"/>
    </ligandPart>
</feature>
<gene>
    <name evidence="4" type="primary">ABA2</name>
    <name type="ORF">OOU_Y34scaffold00799g15</name>
</gene>
<proteinExistence type="evidence at transcript level"/>
<sequence>MYGTNLLETMGKPTAGHLGMAVTFTPKAYRELHEKYAAPFTNRALLQQQDILRVHVDKLITALRAKARNKESVNMGEWSPHTQPDTYTTFDIIGDICFAEPFGCLDGGESNEWARAIINIFKAATWDQAIRRVAGTGTLLHKALVKIIIPAEAAQWRTIHFSNSKAKTLARLADPDRQHPDLIKHILDSEDSRAALSPTEIILNMVLFISAGSETTANTMTGWTYFMLRHPEARARATAEVRAAFASPRDIKWETVRALPYLNATLEEALRLFSPAPSNQPRVVPACGAVVAGCPLPSGTTVSVAPWAAVFSARNFADPERFAPERWLDEGGADPRYAADRRGASQPFSTGPRGCMGKNLAYFELRLVLAHLLWHFDLEPTDSAAGRECMRRWEQTDMDTYQTWMKPDLWVDLKEAQR</sequence>